<name>G6PI_SHIBS</name>
<protein>
    <recommendedName>
        <fullName evidence="1">Glucose-6-phosphate isomerase</fullName>
        <shortName evidence="1">GPI</shortName>
        <ecNumber evidence="1">5.3.1.9</ecNumber>
    </recommendedName>
    <alternativeName>
        <fullName evidence="1">Phosphoglucose isomerase</fullName>
        <shortName evidence="1">PGI</shortName>
    </alternativeName>
    <alternativeName>
        <fullName evidence="1">Phosphohexose isomerase</fullName>
        <shortName evidence="1">PHI</shortName>
    </alternativeName>
</protein>
<feature type="chain" id="PRO_0000230933" description="Glucose-6-phosphate isomerase">
    <location>
        <begin position="1"/>
        <end position="549"/>
    </location>
</feature>
<feature type="active site" description="Proton donor" evidence="1">
    <location>
        <position position="355"/>
    </location>
</feature>
<feature type="active site" evidence="1">
    <location>
        <position position="386"/>
    </location>
</feature>
<feature type="active site" evidence="1">
    <location>
        <position position="514"/>
    </location>
</feature>
<feature type="modified residue" description="N6-acetyllysine" evidence="1">
    <location>
        <position position="80"/>
    </location>
</feature>
<feature type="modified residue" description="N6-acetyllysine" evidence="1">
    <location>
        <position position="228"/>
    </location>
</feature>
<feature type="modified residue" description="N6-acetyllysine" evidence="1">
    <location>
        <position position="234"/>
    </location>
</feature>
<organism>
    <name type="scientific">Shigella boydii serotype 4 (strain Sb227)</name>
    <dbReference type="NCBI Taxonomy" id="300268"/>
    <lineage>
        <taxon>Bacteria</taxon>
        <taxon>Pseudomonadati</taxon>
        <taxon>Pseudomonadota</taxon>
        <taxon>Gammaproteobacteria</taxon>
        <taxon>Enterobacterales</taxon>
        <taxon>Enterobacteriaceae</taxon>
        <taxon>Shigella</taxon>
    </lineage>
</organism>
<accession>Q31TX1</accession>
<comment type="function">
    <text evidence="1">Catalyzes the reversible isomerization of glucose-6-phosphate to fructose-6-phosphate.</text>
</comment>
<comment type="catalytic activity">
    <reaction evidence="1">
        <text>alpha-D-glucose 6-phosphate = beta-D-fructose 6-phosphate</text>
        <dbReference type="Rhea" id="RHEA:11816"/>
        <dbReference type="ChEBI" id="CHEBI:57634"/>
        <dbReference type="ChEBI" id="CHEBI:58225"/>
        <dbReference type="EC" id="5.3.1.9"/>
    </reaction>
</comment>
<comment type="pathway">
    <text evidence="1">Carbohydrate biosynthesis; gluconeogenesis.</text>
</comment>
<comment type="pathway">
    <text evidence="1">Carbohydrate degradation; glycolysis; D-glyceraldehyde 3-phosphate and glycerone phosphate from D-glucose: step 2/4.</text>
</comment>
<comment type="subcellular location">
    <subcellularLocation>
        <location evidence="1">Cytoplasm</location>
    </subcellularLocation>
</comment>
<comment type="similarity">
    <text evidence="1">Belongs to the GPI family.</text>
</comment>
<proteinExistence type="inferred from homology"/>
<gene>
    <name evidence="1" type="primary">pgi</name>
    <name type="ordered locus">SBO_4053</name>
</gene>
<dbReference type="EC" id="5.3.1.9" evidence="1"/>
<dbReference type="EMBL" id="CP000036">
    <property type="protein sequence ID" value="ABB68487.1"/>
    <property type="molecule type" value="Genomic_DNA"/>
</dbReference>
<dbReference type="RefSeq" id="WP_000789986.1">
    <property type="nucleotide sequence ID" value="NC_007613.1"/>
</dbReference>
<dbReference type="SMR" id="Q31TX1"/>
<dbReference type="GeneID" id="93777863"/>
<dbReference type="KEGG" id="sbo:SBO_4053"/>
<dbReference type="HOGENOM" id="CLU_017947_3_1_6"/>
<dbReference type="UniPathway" id="UPA00109">
    <property type="reaction ID" value="UER00181"/>
</dbReference>
<dbReference type="UniPathway" id="UPA00138"/>
<dbReference type="Proteomes" id="UP000007067">
    <property type="component" value="Chromosome"/>
</dbReference>
<dbReference type="GO" id="GO:0005829">
    <property type="term" value="C:cytosol"/>
    <property type="evidence" value="ECO:0007669"/>
    <property type="project" value="TreeGrafter"/>
</dbReference>
<dbReference type="GO" id="GO:0097367">
    <property type="term" value="F:carbohydrate derivative binding"/>
    <property type="evidence" value="ECO:0007669"/>
    <property type="project" value="InterPro"/>
</dbReference>
<dbReference type="GO" id="GO:0004347">
    <property type="term" value="F:glucose-6-phosphate isomerase activity"/>
    <property type="evidence" value="ECO:0007669"/>
    <property type="project" value="UniProtKB-UniRule"/>
</dbReference>
<dbReference type="GO" id="GO:0048029">
    <property type="term" value="F:monosaccharide binding"/>
    <property type="evidence" value="ECO:0007669"/>
    <property type="project" value="TreeGrafter"/>
</dbReference>
<dbReference type="GO" id="GO:0006094">
    <property type="term" value="P:gluconeogenesis"/>
    <property type="evidence" value="ECO:0007669"/>
    <property type="project" value="UniProtKB-UniRule"/>
</dbReference>
<dbReference type="GO" id="GO:0051156">
    <property type="term" value="P:glucose 6-phosphate metabolic process"/>
    <property type="evidence" value="ECO:0007669"/>
    <property type="project" value="TreeGrafter"/>
</dbReference>
<dbReference type="GO" id="GO:0006096">
    <property type="term" value="P:glycolytic process"/>
    <property type="evidence" value="ECO:0007669"/>
    <property type="project" value="UniProtKB-UniRule"/>
</dbReference>
<dbReference type="CDD" id="cd05015">
    <property type="entry name" value="SIS_PGI_1"/>
    <property type="match status" value="1"/>
</dbReference>
<dbReference type="CDD" id="cd05016">
    <property type="entry name" value="SIS_PGI_2"/>
    <property type="match status" value="1"/>
</dbReference>
<dbReference type="FunFam" id="1.10.1390.10:FF:000001">
    <property type="entry name" value="Glucose-6-phosphate isomerase"/>
    <property type="match status" value="1"/>
</dbReference>
<dbReference type="FunFam" id="3.40.50.10490:FF:000004">
    <property type="entry name" value="Glucose-6-phosphate isomerase"/>
    <property type="match status" value="1"/>
</dbReference>
<dbReference type="Gene3D" id="1.10.1390.10">
    <property type="match status" value="1"/>
</dbReference>
<dbReference type="Gene3D" id="3.40.50.10490">
    <property type="entry name" value="Glucose-6-phosphate isomerase like protein, domain 1"/>
    <property type="match status" value="2"/>
</dbReference>
<dbReference type="HAMAP" id="MF_00473">
    <property type="entry name" value="G6P_isomerase"/>
    <property type="match status" value="1"/>
</dbReference>
<dbReference type="InterPro" id="IPR001672">
    <property type="entry name" value="G6P_Isomerase"/>
</dbReference>
<dbReference type="InterPro" id="IPR023096">
    <property type="entry name" value="G6P_Isomerase_C"/>
</dbReference>
<dbReference type="InterPro" id="IPR018189">
    <property type="entry name" value="Phosphoglucose_isomerase_CS"/>
</dbReference>
<dbReference type="InterPro" id="IPR046348">
    <property type="entry name" value="SIS_dom_sf"/>
</dbReference>
<dbReference type="InterPro" id="IPR035476">
    <property type="entry name" value="SIS_PGI_1"/>
</dbReference>
<dbReference type="InterPro" id="IPR035482">
    <property type="entry name" value="SIS_PGI_2"/>
</dbReference>
<dbReference type="NCBIfam" id="NF001211">
    <property type="entry name" value="PRK00179.1"/>
    <property type="match status" value="1"/>
</dbReference>
<dbReference type="PANTHER" id="PTHR11469">
    <property type="entry name" value="GLUCOSE-6-PHOSPHATE ISOMERASE"/>
    <property type="match status" value="1"/>
</dbReference>
<dbReference type="PANTHER" id="PTHR11469:SF1">
    <property type="entry name" value="GLUCOSE-6-PHOSPHATE ISOMERASE"/>
    <property type="match status" value="1"/>
</dbReference>
<dbReference type="Pfam" id="PF00342">
    <property type="entry name" value="PGI"/>
    <property type="match status" value="1"/>
</dbReference>
<dbReference type="PRINTS" id="PR00662">
    <property type="entry name" value="G6PISOMERASE"/>
</dbReference>
<dbReference type="SUPFAM" id="SSF53697">
    <property type="entry name" value="SIS domain"/>
    <property type="match status" value="1"/>
</dbReference>
<dbReference type="PROSITE" id="PS00765">
    <property type="entry name" value="P_GLUCOSE_ISOMERASE_1"/>
    <property type="match status" value="1"/>
</dbReference>
<dbReference type="PROSITE" id="PS00174">
    <property type="entry name" value="P_GLUCOSE_ISOMERASE_2"/>
    <property type="match status" value="1"/>
</dbReference>
<dbReference type="PROSITE" id="PS51463">
    <property type="entry name" value="P_GLUCOSE_ISOMERASE_3"/>
    <property type="match status" value="1"/>
</dbReference>
<keyword id="KW-0007">Acetylation</keyword>
<keyword id="KW-0963">Cytoplasm</keyword>
<keyword id="KW-0312">Gluconeogenesis</keyword>
<keyword id="KW-0324">Glycolysis</keyword>
<keyword id="KW-0413">Isomerase</keyword>
<evidence type="ECO:0000255" key="1">
    <source>
        <dbReference type="HAMAP-Rule" id="MF_00473"/>
    </source>
</evidence>
<reference key="1">
    <citation type="journal article" date="2005" name="Nucleic Acids Res.">
        <title>Genome dynamics and diversity of Shigella species, the etiologic agents of bacillary dysentery.</title>
        <authorList>
            <person name="Yang F."/>
            <person name="Yang J."/>
            <person name="Zhang X."/>
            <person name="Chen L."/>
            <person name="Jiang Y."/>
            <person name="Yan Y."/>
            <person name="Tang X."/>
            <person name="Wang J."/>
            <person name="Xiong Z."/>
            <person name="Dong J."/>
            <person name="Xue Y."/>
            <person name="Zhu Y."/>
            <person name="Xu X."/>
            <person name="Sun L."/>
            <person name="Chen S."/>
            <person name="Nie H."/>
            <person name="Peng J."/>
            <person name="Xu J."/>
            <person name="Wang Y."/>
            <person name="Yuan Z."/>
            <person name="Wen Y."/>
            <person name="Yao Z."/>
            <person name="Shen Y."/>
            <person name="Qiang B."/>
            <person name="Hou Y."/>
            <person name="Yu J."/>
            <person name="Jin Q."/>
        </authorList>
    </citation>
    <scope>NUCLEOTIDE SEQUENCE [LARGE SCALE GENOMIC DNA]</scope>
    <source>
        <strain>Sb227</strain>
    </source>
</reference>
<sequence length="549" mass="61530">MKNINPTQTAAWQALQKHFDEMKDVTIADLFAKDGDRFSKFSATFDDQMLVDYSKNRITEETLAKLQDLAKECDLAGAIKSMFSGEKINRTENRAVLHVALRNRSNTPILVDGKDVMPEVNAVLEKMKTFSEAIISGEWKGYTGKAITDVVNIGIGGSDLGPYMVTEALRPYKNHLNMHFVSNVDGTHIAEVLKKVNPETTLFLVASKTFTTQETMTNAHSARDWFLKAAGDEKHVAKHFAALSTNAKAVGEFGIDTANMFEFWDWVGGRYSLWSAIGLSIVLSIGFDNFVELLSGAHAMDKHFSTTPAEKNLPVLLALIGIWYNNFFGAETEAILPYDQYMHRFAAYFQQGNMESNGKYVDRNGNVVDYQTGPIIWGEPGTNGQHAFYQLIHQGTKMVPCDFIAPAITHNPLSDHHQKLLSNFFAQTEALAFGKSREVVEQEYRDQGKDPATLDYVVPFKVFEGNRPTNSILLREITPFSLGALIALYEHKIFTQGVILNIFTFDQWGVELGKQLANRILPELKDDKEISSHDSSTNGLINRYKAWRG</sequence>